<keyword id="KW-0002">3D-structure</keyword>
<keyword id="KW-0150">Chloroplast</keyword>
<keyword id="KW-0934">Plastid</keyword>
<keyword id="KW-1185">Reference proteome</keyword>
<keyword id="KW-0677">Repeat</keyword>
<keyword id="KW-0694">RNA-binding</keyword>
<keyword id="KW-0809">Transit peptide</keyword>
<evidence type="ECO:0000255" key="1"/>
<evidence type="ECO:0000255" key="2">
    <source>
        <dbReference type="PROSITE-ProRule" id="PRU00708"/>
    </source>
</evidence>
<evidence type="ECO:0000269" key="3">
    <source>
    </source>
</evidence>
<evidence type="ECO:0000303" key="4">
    <source>
    </source>
</evidence>
<evidence type="ECO:0000305" key="5"/>
<evidence type="ECO:0000312" key="6">
    <source>
        <dbReference type="Araport" id="AT3G46870"/>
    </source>
</evidence>
<evidence type="ECO:0000312" key="7">
    <source>
        <dbReference type="EMBL" id="CAB51178.1"/>
    </source>
</evidence>
<evidence type="ECO:0007829" key="8">
    <source>
        <dbReference type="PDB" id="4LEU"/>
    </source>
</evidence>
<organism>
    <name type="scientific">Arabidopsis thaliana</name>
    <name type="common">Mouse-ear cress</name>
    <dbReference type="NCBI Taxonomy" id="3702"/>
    <lineage>
        <taxon>Eukaryota</taxon>
        <taxon>Viridiplantae</taxon>
        <taxon>Streptophyta</taxon>
        <taxon>Embryophyta</taxon>
        <taxon>Tracheophyta</taxon>
        <taxon>Spermatophyta</taxon>
        <taxon>Magnoliopsida</taxon>
        <taxon>eudicotyledons</taxon>
        <taxon>Gunneridae</taxon>
        <taxon>Pentapetalae</taxon>
        <taxon>rosids</taxon>
        <taxon>malvids</taxon>
        <taxon>Brassicales</taxon>
        <taxon>Brassicaceae</taxon>
        <taxon>Camelineae</taxon>
        <taxon>Arabidopsis</taxon>
    </lineage>
</organism>
<name>THA8L_ARATH</name>
<feature type="transit peptide" description="Chloroplast" evidence="1">
    <location>
        <begin position="1"/>
        <end position="55"/>
    </location>
</feature>
<feature type="chain" id="PRO_0000356125" description="Protein THYLAKOID ASSEMBLY 8-like, chloroplastic">
    <location>
        <begin position="56"/>
        <end position="257"/>
    </location>
</feature>
<feature type="repeat" description="PPR 1" evidence="2">
    <location>
        <begin position="142"/>
        <end position="176"/>
    </location>
</feature>
<feature type="repeat" description="PPR 2" evidence="2">
    <location>
        <begin position="177"/>
        <end position="211"/>
    </location>
</feature>
<feature type="mutagenesis site" description="Abolished RNA binding." evidence="3">
    <original>K</original>
    <variation>E</variation>
    <location>
        <position position="75"/>
    </location>
</feature>
<feature type="mutagenesis site" description="Reduced RNA binding." evidence="3">
    <original>R</original>
    <variation>E</variation>
    <location>
        <position position="86"/>
    </location>
</feature>
<feature type="mutagenesis site" description="Reduced RNA binding." evidence="3">
    <original>K</original>
    <variation>E</variation>
    <location>
        <position position="93"/>
    </location>
</feature>
<feature type="mutagenesis site" description="Reduced RNA binding." evidence="3">
    <original>K</original>
    <variation>E</variation>
    <location>
        <position position="96"/>
    </location>
</feature>
<feature type="mutagenesis site" description="Abolished RNA binding." evidence="3">
    <original>R</original>
    <variation>E</variation>
    <location>
        <position position="104"/>
    </location>
</feature>
<feature type="mutagenesis site" description="Abolished RNA binding." evidence="3">
    <original>R</original>
    <variation>E</variation>
    <location>
        <position position="119"/>
    </location>
</feature>
<feature type="mutagenesis site" description="Abolished RNA binding." evidence="3">
    <original>K</original>
    <variation>E</variation>
    <location>
        <position position="155"/>
    </location>
</feature>
<feature type="mutagenesis site" description="Reduced RNA binding." evidence="3">
    <original>K</original>
    <variation>E</variation>
    <location>
        <position position="157"/>
    </location>
</feature>
<feature type="mutagenesis site" description="Reduced RNA binding." evidence="3">
    <original>R</original>
    <variation>E</variation>
    <location>
        <position position="158"/>
    </location>
</feature>
<feature type="mutagenesis site" description="Reduced RNA binding." evidence="3">
    <original>R</original>
    <variation>E</variation>
    <location>
        <position position="186"/>
    </location>
</feature>
<feature type="mutagenesis site" description="Reduced RNA binding." evidence="3">
    <original>R</original>
    <variation>E</variation>
    <location>
        <position position="190"/>
    </location>
</feature>
<feature type="mutagenesis site" description="Reduced RNA binding." evidence="3">
    <original>K</original>
    <variation>E</variation>
    <location>
        <position position="206"/>
    </location>
</feature>
<feature type="mutagenesis site" description="Reduced RNA binding." evidence="3">
    <original>R</original>
    <variation>E</variation>
    <location>
        <position position="217"/>
    </location>
</feature>
<feature type="mutagenesis site" description="Reduced RNA binding." evidence="3">
    <original>K</original>
    <variation>E</variation>
    <location>
        <position position="221"/>
    </location>
</feature>
<feature type="helix" evidence="8">
    <location>
        <begin position="75"/>
        <end position="87"/>
    </location>
</feature>
<feature type="helix" evidence="8">
    <location>
        <begin position="91"/>
        <end position="101"/>
    </location>
</feature>
<feature type="turn" evidence="8">
    <location>
        <begin position="102"/>
        <end position="104"/>
    </location>
</feature>
<feature type="helix" evidence="8">
    <location>
        <begin position="107"/>
        <end position="120"/>
    </location>
</feature>
<feature type="helix" evidence="8">
    <location>
        <begin position="123"/>
        <end position="134"/>
    </location>
</feature>
<feature type="helix" evidence="8">
    <location>
        <begin position="143"/>
        <end position="155"/>
    </location>
</feature>
<feature type="helix" evidence="8">
    <location>
        <begin position="159"/>
        <end position="171"/>
    </location>
</feature>
<feature type="helix" evidence="8">
    <location>
        <begin position="178"/>
        <end position="190"/>
    </location>
</feature>
<feature type="helix" evidence="8">
    <location>
        <begin position="194"/>
        <end position="205"/>
    </location>
</feature>
<feature type="strand" evidence="8">
    <location>
        <begin position="207"/>
        <end position="209"/>
    </location>
</feature>
<feature type="helix" evidence="8">
    <location>
        <begin position="213"/>
        <end position="222"/>
    </location>
</feature>
<feature type="turn" evidence="8">
    <location>
        <begin position="223"/>
        <end position="225"/>
    </location>
</feature>
<feature type="helix" evidence="8">
    <location>
        <begin position="227"/>
        <end position="240"/>
    </location>
</feature>
<feature type="helix" evidence="8">
    <location>
        <begin position="242"/>
        <end position="247"/>
    </location>
</feature>
<gene>
    <name evidence="4" type="primary">THA8L</name>
    <name evidence="6" type="ordered locus">At3g46870</name>
    <name evidence="7" type="ORF">T6H20.100</name>
</gene>
<sequence>MTAIRVCSRKFPTFASIFFQNITRNPSIHRISFSNLKPKTLLHPIPPKPFTVFVSRFHDGRPRGPLWRGKKLIGKEALFVILGLKRLKEDDEKLDKFIKTHVFRLLKLDMLAVIGELERQEETALAIKMFEVIQKQEWYQPDVFMYKDLIVSLAKSKRMDEAMALWEKMKKENLFPDSQTYTEVIRGFLRDGCPADAMNVYEDMLKSPDPPEELPFRVLLKGLLPHPLLRNKVKKDFEELFPEKHAYDPPEEIFGRC</sequence>
<accession>Q9STF9</accession>
<comment type="function">
    <text evidence="3">Binds weakly to specific single strand RNA (ssRNA).</text>
</comment>
<comment type="subcellular location">
    <subcellularLocation>
        <location evidence="1">Plastid</location>
        <location evidence="1">Chloroplast</location>
    </subcellularLocation>
</comment>
<comment type="similarity">
    <text evidence="5">Belongs to the PPR family. P subfamily.</text>
</comment>
<comment type="online information" name="Pentatricopeptide repeat proteins">
    <link uri="https://ppr.plantenergy.uwa.edu.au"/>
</comment>
<protein>
    <recommendedName>
        <fullName evidence="4">Protein THYLAKOID ASSEMBLY 8-like, chloroplastic</fullName>
        <shortName evidence="4">AtTHA8L</shortName>
    </recommendedName>
</protein>
<dbReference type="EMBL" id="AL096859">
    <property type="protein sequence ID" value="CAB51178.1"/>
    <property type="molecule type" value="Genomic_DNA"/>
</dbReference>
<dbReference type="EMBL" id="CP002686">
    <property type="protein sequence ID" value="AEE78213.1"/>
    <property type="molecule type" value="Genomic_DNA"/>
</dbReference>
<dbReference type="EMBL" id="AK117833">
    <property type="protein sequence ID" value="BAC42475.1"/>
    <property type="molecule type" value="mRNA"/>
</dbReference>
<dbReference type="EMBL" id="BT005267">
    <property type="protein sequence ID" value="AAO63331.1"/>
    <property type="molecule type" value="mRNA"/>
</dbReference>
<dbReference type="PIR" id="T12961">
    <property type="entry name" value="T12961"/>
</dbReference>
<dbReference type="RefSeq" id="NP_190271.1">
    <property type="nucleotide sequence ID" value="NM_114554.4"/>
</dbReference>
<dbReference type="PDB" id="4LEU">
    <property type="method" value="X-ray"/>
    <property type="resolution" value="2.00 A"/>
    <property type="chains" value="A=1-257"/>
</dbReference>
<dbReference type="PDBsum" id="4LEU"/>
<dbReference type="SMR" id="Q9STF9"/>
<dbReference type="DIP" id="DIP-60556N"/>
<dbReference type="FunCoup" id="Q9STF9">
    <property type="interactions" value="358"/>
</dbReference>
<dbReference type="STRING" id="3702.Q9STF9"/>
<dbReference type="PaxDb" id="3702-AT3G46870.1"/>
<dbReference type="EnsemblPlants" id="AT3G46870.1">
    <property type="protein sequence ID" value="AT3G46870.1"/>
    <property type="gene ID" value="AT3G46870"/>
</dbReference>
<dbReference type="GeneID" id="823840"/>
<dbReference type="Gramene" id="AT3G46870.1">
    <property type="protein sequence ID" value="AT3G46870.1"/>
    <property type="gene ID" value="AT3G46870"/>
</dbReference>
<dbReference type="KEGG" id="ath:AT3G46870"/>
<dbReference type="Araport" id="AT3G46870"/>
<dbReference type="TAIR" id="AT3G46870"/>
<dbReference type="eggNOG" id="ENOG502QPMB">
    <property type="taxonomic scope" value="Eukaryota"/>
</dbReference>
<dbReference type="HOGENOM" id="CLU_077248_1_0_1"/>
<dbReference type="InParanoid" id="Q9STF9"/>
<dbReference type="OrthoDB" id="411857at2759"/>
<dbReference type="PhylomeDB" id="Q9STF9"/>
<dbReference type="EvolutionaryTrace" id="Q9STF9"/>
<dbReference type="PRO" id="PR:Q9STF9"/>
<dbReference type="Proteomes" id="UP000006548">
    <property type="component" value="Chromosome 3"/>
</dbReference>
<dbReference type="ExpressionAtlas" id="Q9STF9">
    <property type="expression patterns" value="baseline and differential"/>
</dbReference>
<dbReference type="GO" id="GO:0009507">
    <property type="term" value="C:chloroplast"/>
    <property type="evidence" value="ECO:0007669"/>
    <property type="project" value="UniProtKB-SubCell"/>
</dbReference>
<dbReference type="GO" id="GO:1990825">
    <property type="term" value="F:sequence-specific mRNA binding"/>
    <property type="evidence" value="ECO:0000314"/>
    <property type="project" value="UniProtKB"/>
</dbReference>
<dbReference type="GO" id="GO:0003727">
    <property type="term" value="F:single-stranded RNA binding"/>
    <property type="evidence" value="ECO:0000314"/>
    <property type="project" value="UniProtKB"/>
</dbReference>
<dbReference type="GO" id="GO:0008270">
    <property type="term" value="F:zinc ion binding"/>
    <property type="evidence" value="ECO:0007005"/>
    <property type="project" value="TAIR"/>
</dbReference>
<dbReference type="FunFam" id="1.25.40.10:FF:001119">
    <property type="entry name" value="Protein THYLAKOID ASSEMBLY 8-like, chloroplastic"/>
    <property type="match status" value="1"/>
</dbReference>
<dbReference type="Gene3D" id="1.25.40.10">
    <property type="entry name" value="Tetratricopeptide repeat domain"/>
    <property type="match status" value="1"/>
</dbReference>
<dbReference type="InterPro" id="IPR002885">
    <property type="entry name" value="Pentatricopeptide_rpt"/>
</dbReference>
<dbReference type="InterPro" id="IPR044795">
    <property type="entry name" value="THA8L-like"/>
</dbReference>
<dbReference type="InterPro" id="IPR011990">
    <property type="entry name" value="TPR-like_helical_dom_sf"/>
</dbReference>
<dbReference type="NCBIfam" id="TIGR00756">
    <property type="entry name" value="PPR"/>
    <property type="match status" value="2"/>
</dbReference>
<dbReference type="PANTHER" id="PTHR46870">
    <property type="entry name" value="PROTEIN THYLAKOID ASSEMBLY 8-LIKE, CHLOROPLASTIC"/>
    <property type="match status" value="1"/>
</dbReference>
<dbReference type="PANTHER" id="PTHR46870:SF2">
    <property type="entry name" value="PROTEIN THYLAKOID ASSEMBLY 8-LIKE, CHLOROPLASTIC"/>
    <property type="match status" value="1"/>
</dbReference>
<dbReference type="Pfam" id="PF13041">
    <property type="entry name" value="PPR_2"/>
    <property type="match status" value="1"/>
</dbReference>
<dbReference type="PROSITE" id="PS51375">
    <property type="entry name" value="PPR"/>
    <property type="match status" value="2"/>
</dbReference>
<reference key="1">
    <citation type="journal article" date="2000" name="Nature">
        <title>Sequence and analysis of chromosome 3 of the plant Arabidopsis thaliana.</title>
        <authorList>
            <person name="Salanoubat M."/>
            <person name="Lemcke K."/>
            <person name="Rieger M."/>
            <person name="Ansorge W."/>
            <person name="Unseld M."/>
            <person name="Fartmann B."/>
            <person name="Valle G."/>
            <person name="Bloecker H."/>
            <person name="Perez-Alonso M."/>
            <person name="Obermaier B."/>
            <person name="Delseny M."/>
            <person name="Boutry M."/>
            <person name="Grivell L.A."/>
            <person name="Mache R."/>
            <person name="Puigdomenech P."/>
            <person name="De Simone V."/>
            <person name="Choisne N."/>
            <person name="Artiguenave F."/>
            <person name="Robert C."/>
            <person name="Brottier P."/>
            <person name="Wincker P."/>
            <person name="Cattolico L."/>
            <person name="Weissenbach J."/>
            <person name="Saurin W."/>
            <person name="Quetier F."/>
            <person name="Schaefer M."/>
            <person name="Mueller-Auer S."/>
            <person name="Gabel C."/>
            <person name="Fuchs M."/>
            <person name="Benes V."/>
            <person name="Wurmbach E."/>
            <person name="Drzonek H."/>
            <person name="Erfle H."/>
            <person name="Jordan N."/>
            <person name="Bangert S."/>
            <person name="Wiedelmann R."/>
            <person name="Kranz H."/>
            <person name="Voss H."/>
            <person name="Holland R."/>
            <person name="Brandt P."/>
            <person name="Nyakatura G."/>
            <person name="Vezzi A."/>
            <person name="D'Angelo M."/>
            <person name="Pallavicini A."/>
            <person name="Toppo S."/>
            <person name="Simionati B."/>
            <person name="Conrad A."/>
            <person name="Hornischer K."/>
            <person name="Kauer G."/>
            <person name="Loehnert T.-H."/>
            <person name="Nordsiek G."/>
            <person name="Reichelt J."/>
            <person name="Scharfe M."/>
            <person name="Schoen O."/>
            <person name="Bargues M."/>
            <person name="Terol J."/>
            <person name="Climent J."/>
            <person name="Navarro P."/>
            <person name="Collado C."/>
            <person name="Perez-Perez A."/>
            <person name="Ottenwaelder B."/>
            <person name="Duchemin D."/>
            <person name="Cooke R."/>
            <person name="Laudie M."/>
            <person name="Berger-Llauro C."/>
            <person name="Purnelle B."/>
            <person name="Masuy D."/>
            <person name="de Haan M."/>
            <person name="Maarse A.C."/>
            <person name="Alcaraz J.-P."/>
            <person name="Cottet A."/>
            <person name="Casacuberta E."/>
            <person name="Monfort A."/>
            <person name="Argiriou A."/>
            <person name="Flores M."/>
            <person name="Liguori R."/>
            <person name="Vitale D."/>
            <person name="Mannhaupt G."/>
            <person name="Haase D."/>
            <person name="Schoof H."/>
            <person name="Rudd S."/>
            <person name="Zaccaria P."/>
            <person name="Mewes H.-W."/>
            <person name="Mayer K.F.X."/>
            <person name="Kaul S."/>
            <person name="Town C.D."/>
            <person name="Koo H.L."/>
            <person name="Tallon L.J."/>
            <person name="Jenkins J."/>
            <person name="Rooney T."/>
            <person name="Rizzo M."/>
            <person name="Walts A."/>
            <person name="Utterback T."/>
            <person name="Fujii C.Y."/>
            <person name="Shea T.P."/>
            <person name="Creasy T.H."/>
            <person name="Haas B."/>
            <person name="Maiti R."/>
            <person name="Wu D."/>
            <person name="Peterson J."/>
            <person name="Van Aken S."/>
            <person name="Pai G."/>
            <person name="Militscher J."/>
            <person name="Sellers P."/>
            <person name="Gill J.E."/>
            <person name="Feldblyum T.V."/>
            <person name="Preuss D."/>
            <person name="Lin X."/>
            <person name="Nierman W.C."/>
            <person name="Salzberg S.L."/>
            <person name="White O."/>
            <person name="Venter J.C."/>
            <person name="Fraser C.M."/>
            <person name="Kaneko T."/>
            <person name="Nakamura Y."/>
            <person name="Sato S."/>
            <person name="Kato T."/>
            <person name="Asamizu E."/>
            <person name="Sasamoto S."/>
            <person name="Kimura T."/>
            <person name="Idesawa K."/>
            <person name="Kawashima K."/>
            <person name="Kishida Y."/>
            <person name="Kiyokawa C."/>
            <person name="Kohara M."/>
            <person name="Matsumoto M."/>
            <person name="Matsuno A."/>
            <person name="Muraki A."/>
            <person name="Nakayama S."/>
            <person name="Nakazaki N."/>
            <person name="Shinpo S."/>
            <person name="Takeuchi C."/>
            <person name="Wada T."/>
            <person name="Watanabe A."/>
            <person name="Yamada M."/>
            <person name="Yasuda M."/>
            <person name="Tabata S."/>
        </authorList>
    </citation>
    <scope>NUCLEOTIDE SEQUENCE [LARGE SCALE GENOMIC DNA]</scope>
    <source>
        <strain>cv. Columbia</strain>
    </source>
</reference>
<reference key="2">
    <citation type="journal article" date="2017" name="Plant J.">
        <title>Araport11: a complete reannotation of the Arabidopsis thaliana reference genome.</title>
        <authorList>
            <person name="Cheng C.Y."/>
            <person name="Krishnakumar V."/>
            <person name="Chan A.P."/>
            <person name="Thibaud-Nissen F."/>
            <person name="Schobel S."/>
            <person name="Town C.D."/>
        </authorList>
    </citation>
    <scope>GENOME REANNOTATION</scope>
    <source>
        <strain>cv. Columbia</strain>
    </source>
</reference>
<reference key="3">
    <citation type="journal article" date="2002" name="Science">
        <title>Functional annotation of a full-length Arabidopsis cDNA collection.</title>
        <authorList>
            <person name="Seki M."/>
            <person name="Narusaka M."/>
            <person name="Kamiya A."/>
            <person name="Ishida J."/>
            <person name="Satou M."/>
            <person name="Sakurai T."/>
            <person name="Nakajima M."/>
            <person name="Enju A."/>
            <person name="Akiyama K."/>
            <person name="Oono Y."/>
            <person name="Muramatsu M."/>
            <person name="Hayashizaki Y."/>
            <person name="Kawai J."/>
            <person name="Carninci P."/>
            <person name="Itoh M."/>
            <person name="Ishii Y."/>
            <person name="Arakawa T."/>
            <person name="Shibata K."/>
            <person name="Shinagawa A."/>
            <person name="Shinozaki K."/>
        </authorList>
    </citation>
    <scope>NUCLEOTIDE SEQUENCE [LARGE SCALE MRNA]</scope>
    <source>
        <strain>cv. Columbia</strain>
    </source>
</reference>
<reference key="4">
    <citation type="journal article" date="2003" name="Science">
        <title>Empirical analysis of transcriptional activity in the Arabidopsis genome.</title>
        <authorList>
            <person name="Yamada K."/>
            <person name="Lim J."/>
            <person name="Dale J.M."/>
            <person name="Chen H."/>
            <person name="Shinn P."/>
            <person name="Palm C.J."/>
            <person name="Southwick A.M."/>
            <person name="Wu H.C."/>
            <person name="Kim C.J."/>
            <person name="Nguyen M."/>
            <person name="Pham P.K."/>
            <person name="Cheuk R.F."/>
            <person name="Karlin-Newmann G."/>
            <person name="Liu S.X."/>
            <person name="Lam B."/>
            <person name="Sakano H."/>
            <person name="Wu T."/>
            <person name="Yu G."/>
            <person name="Miranda M."/>
            <person name="Quach H.L."/>
            <person name="Tripp M."/>
            <person name="Chang C.H."/>
            <person name="Lee J.M."/>
            <person name="Toriumi M.J."/>
            <person name="Chan M.M."/>
            <person name="Tang C.C."/>
            <person name="Onodera C.S."/>
            <person name="Deng J.M."/>
            <person name="Akiyama K."/>
            <person name="Ansari Y."/>
            <person name="Arakawa T."/>
            <person name="Banh J."/>
            <person name="Banno F."/>
            <person name="Bowser L."/>
            <person name="Brooks S.Y."/>
            <person name="Carninci P."/>
            <person name="Chao Q."/>
            <person name="Choy N."/>
            <person name="Enju A."/>
            <person name="Goldsmith A.D."/>
            <person name="Gurjal M."/>
            <person name="Hansen N.F."/>
            <person name="Hayashizaki Y."/>
            <person name="Johnson-Hopson C."/>
            <person name="Hsuan V.W."/>
            <person name="Iida K."/>
            <person name="Karnes M."/>
            <person name="Khan S."/>
            <person name="Koesema E."/>
            <person name="Ishida J."/>
            <person name="Jiang P.X."/>
            <person name="Jones T."/>
            <person name="Kawai J."/>
            <person name="Kamiya A."/>
            <person name="Meyers C."/>
            <person name="Nakajima M."/>
            <person name="Narusaka M."/>
            <person name="Seki M."/>
            <person name="Sakurai T."/>
            <person name="Satou M."/>
            <person name="Tamse R."/>
            <person name="Vaysberg M."/>
            <person name="Wallender E.K."/>
            <person name="Wong C."/>
            <person name="Yamamura Y."/>
            <person name="Yuan S."/>
            <person name="Shinozaki K."/>
            <person name="Davis R.W."/>
            <person name="Theologis A."/>
            <person name="Ecker J.R."/>
        </authorList>
    </citation>
    <scope>NUCLEOTIDE SEQUENCE [LARGE SCALE MRNA]</scope>
    <source>
        <strain>cv. Columbia</strain>
    </source>
</reference>
<reference key="5">
    <citation type="journal article" date="2004" name="Plant Cell">
        <title>Genome-wide analysis of Arabidopsis pentatricopeptide repeat proteins reveals their essential role in organelle biogenesis.</title>
        <authorList>
            <person name="Lurin C."/>
            <person name="Andres C."/>
            <person name="Aubourg S."/>
            <person name="Bellaoui M."/>
            <person name="Bitton F."/>
            <person name="Bruyere C."/>
            <person name="Caboche M."/>
            <person name="Debast C."/>
            <person name="Gualberto J."/>
            <person name="Hoffmann B."/>
            <person name="Lecharny A."/>
            <person name="Le Ret M."/>
            <person name="Martin-Magniette M.-L."/>
            <person name="Mireau H."/>
            <person name="Peeters N."/>
            <person name="Renou J.-P."/>
            <person name="Szurek B."/>
            <person name="Taconnat L."/>
            <person name="Small I."/>
        </authorList>
    </citation>
    <scope>GENE FAMILY</scope>
</reference>
<reference key="6">
    <citation type="journal article" date="2013" name="J. Biol. Chem.">
        <title>Structure of a PLS-class pentatricopeptide repeat protein provides insights into mechanism of RNA recognition.</title>
        <authorList>
            <person name="Ban T."/>
            <person name="Ke J."/>
            <person name="Chen R."/>
            <person name="Gu X."/>
            <person name="Tan M.H.E."/>
            <person name="Zhou X.E."/>
            <person name="Kang Y."/>
            <person name="Melcher K."/>
            <person name="Zhu J.-K."/>
            <person name="Xu H.E."/>
        </authorList>
    </citation>
    <scope>X-RAY CRYSTALLOGRAPHY (2.00 ANGSTROMS)</scope>
    <scope>FUNCTION</scope>
    <scope>MUTAGENESIS OF LYS-75; ARG-86; LYS-93; LYS-96; ARG-104; ARG-119; LYS-155; LYS-157; ARG-158; ARG-186; ARG-190; LYS-206; ARG-217 AND LYS-221</scope>
</reference>
<proteinExistence type="evidence at protein level"/>